<gene>
    <name type="primary">TUBA1D</name>
</gene>
<accession>Q2HJ86</accession>
<protein>
    <recommendedName>
        <fullName>Tubulin alpha-1D chain</fullName>
        <ecNumber evidence="2">3.6.5.-</ecNumber>
    </recommendedName>
    <component>
        <recommendedName>
            <fullName>Detyrosinated tubulin alpha-1D chain</fullName>
        </recommendedName>
    </component>
</protein>
<comment type="function">
    <text evidence="8 9 10">Tubulin is the major constituent of microtubules, a cylinder consisting of laterally associated linear protofilaments composed of alpha- and beta-tubulin heterodimers (PubMed:2207090, PubMed:6504138, PubMed:7704569). Microtubules grow by the addition of GTP-tubulin dimers to the microtubule end, where a stabilizing cap forms. Below the cap, tubulin dimers are in GDP-bound state, owing to GTPase activity of alpha-tubulin (PubMed:2207090, PubMed:6504138, PubMed:7704569).</text>
</comment>
<comment type="catalytic activity">
    <reaction evidence="2">
        <text>GTP + H2O = GDP + phosphate + H(+)</text>
        <dbReference type="Rhea" id="RHEA:19669"/>
        <dbReference type="ChEBI" id="CHEBI:15377"/>
        <dbReference type="ChEBI" id="CHEBI:15378"/>
        <dbReference type="ChEBI" id="CHEBI:37565"/>
        <dbReference type="ChEBI" id="CHEBI:43474"/>
        <dbReference type="ChEBI" id="CHEBI:58189"/>
    </reaction>
    <physiologicalReaction direction="left-to-right" evidence="2">
        <dbReference type="Rhea" id="RHEA:19670"/>
    </physiologicalReaction>
</comment>
<comment type="cofactor">
    <cofactor evidence="2">
        <name>Mg(2+)</name>
        <dbReference type="ChEBI" id="CHEBI:18420"/>
    </cofactor>
</comment>
<comment type="subunit">
    <text evidence="8 9 10">Dimer of alpha and beta chains (PubMed:2207090, PubMed:6504138, PubMed:7704569). A typical microtubule is a hollow water-filled tube with an outer diameter of 25 nm and an inner diameter of 15 nM. Alpha-beta heterodimers associate head-to-tail to form protofilaments running lengthwise along the microtubule wall with the beta-tubulin subunit facing the microtubule plus end conferring a structural polarity. Microtubules usually have 13 protofilaments but different protofilament numbers can be found in some organisms and specialized cells.</text>
</comment>
<comment type="subcellular location">
    <subcellularLocation>
        <location evidence="8 9 10">Cytoplasm</location>
        <location evidence="8 9 10">Cytoskeleton</location>
    </subcellularLocation>
</comment>
<comment type="domain">
    <text evidence="2">The MREC motif may be critical for tubulin autoregulation.</text>
</comment>
<comment type="PTM">
    <text evidence="3">Some glutamate residues at the C-terminus are polyglycylated, resulting in polyglycine chains on the gamma-carboxyl group. Glycylation is mainly limited to tubulin incorporated into axonemes (cilia and flagella) whereas glutamylation is prevalent in neuronal cells, centrioles, axonemes, and the mitotic spindle. Both modifications can coexist on the same protein on adjacent residues, and lowering polyglycylation levels increases polyglutamylation, and reciprocally. Cilia and flagella glycylation is required for their stability and maintenance. Flagella glycylation controls sperm motility.</text>
</comment>
<comment type="PTM">
    <text evidence="3 5">Some glutamate residues at the C-terminus are polyglutamylated, resulting in polyglutamate chains on the gamma-carboxyl group (By similarity). Polyglutamylation plays a key role in microtubule severing by spastin (SPAST). SPAST preferentially recognizes and acts on microtubules decorated with short polyglutamate tails: severing activity by SPAST increases as the number of glutamates per tubulin rises from one to eight, but decreases beyond this glutamylation threshold (By similarity). Glutamylation is also involved in cilia motility (By similarity).</text>
</comment>
<comment type="PTM">
    <text evidence="5">Acetylation of alpha chains at Lys-40 is located inside the microtubule lumen. This modification has been correlated with increased microtubule stability, intracellular transport and ciliary assembly.</text>
</comment>
<comment type="PTM">
    <text evidence="2">Methylation of alpha chains at Lys-40 is found in mitotic microtubules and is required for normal mitosis and cytokinesis contributing to genomic stability.</text>
</comment>
<comment type="PTM">
    <text evidence="5">Nitration of Tyr-452 is irreversible and interferes with normal dynein intracellular distribution.</text>
</comment>
<comment type="PTM">
    <text evidence="3 5">Undergoes a tyrosination/detyrosination cycle, the cyclic removal and re-addition of a C-terminal tyrosine residue by the enzymes tubulin tyrosine carboxypeptidase (MATCAP, VASH1 or VASH2) and tubulin tyrosine ligase (TTL), respectively.</text>
</comment>
<comment type="PTM">
    <molecule>Tubulin alpha-1D chain</molecule>
    <text evidence="3 5">Tyrosination promotes microtubule interaction with CAP-Gly domain-containing proteins such as CLIP1, CLIP2 and DCTN1 (By similarity). Tyrosination regulates the initiation of dynein-dynactin motility via interaction with DCTN1, which brings the dynein-dynactin complex into contact with microtubules. In neurons, tyrosinated tubulins mediate the initiation of retrograde vesicle transport (By similarity).</text>
</comment>
<comment type="PTM">
    <molecule>Detyrosinated tubulin alpha-1D chain</molecule>
    <text evidence="4 6">Detyrosination is involved in metaphase plate congression by guiding chromosomes during mitosis: detyrosination promotes interaction with CENPE, promoting pole-proximal transport of chromosomes toward the equator (By similarity). Detyrosination increases microtubules-dependent mechanotransduction in dystrophic cardiac and skeletal muscle. In cardiomyocytes, detyrosinated microtubules are required to resist to contractile compression during contraction: detyrosination promotes association with desmin (DES) at force-generating sarcomeres, leading to buckled microtubules and mechanical resistance to contraction (By similarity).</text>
</comment>
<comment type="similarity">
    <text evidence="11">Belongs to the tubulin family.</text>
</comment>
<keyword id="KW-0002">3D-structure</keyword>
<keyword id="KW-0007">Acetylation</keyword>
<keyword id="KW-0963">Cytoplasm</keyword>
<keyword id="KW-0206">Cytoskeleton</keyword>
<keyword id="KW-0342">GTP-binding</keyword>
<keyword id="KW-0378">Hydrolase</keyword>
<keyword id="KW-1017">Isopeptide bond</keyword>
<keyword id="KW-0460">Magnesium</keyword>
<keyword id="KW-0479">Metal-binding</keyword>
<keyword id="KW-0488">Methylation</keyword>
<keyword id="KW-0493">Microtubule</keyword>
<keyword id="KW-0944">Nitration</keyword>
<keyword id="KW-0547">Nucleotide-binding</keyword>
<keyword id="KW-0597">Phosphoprotein</keyword>
<keyword id="KW-1185">Reference proteome</keyword>
<feature type="chain" id="PRO_0000288849" description="Tubulin alpha-1D chain">
    <location>
        <begin position="1"/>
        <end position="452"/>
    </location>
</feature>
<feature type="chain" id="PRO_0000437391" description="Detyrosinated tubulin alpha-1D chain" evidence="6">
    <location>
        <begin position="1"/>
        <end position="448"/>
    </location>
</feature>
<feature type="region of interest" description="Disordered" evidence="7">
    <location>
        <begin position="432"/>
        <end position="452"/>
    </location>
</feature>
<feature type="short sequence motif" description="MREC motif" evidence="2">
    <location>
        <begin position="1"/>
        <end position="4"/>
    </location>
</feature>
<feature type="active site" evidence="2">
    <location>
        <position position="254"/>
    </location>
</feature>
<feature type="binding site" evidence="2">
    <location>
        <position position="11"/>
    </location>
    <ligand>
        <name>GTP</name>
        <dbReference type="ChEBI" id="CHEBI:37565"/>
    </ligand>
</feature>
<feature type="binding site" evidence="2">
    <location>
        <position position="71"/>
    </location>
    <ligand>
        <name>GTP</name>
        <dbReference type="ChEBI" id="CHEBI:37565"/>
    </ligand>
</feature>
<feature type="binding site" evidence="2">
    <location>
        <position position="71"/>
    </location>
    <ligand>
        <name>Mg(2+)</name>
        <dbReference type="ChEBI" id="CHEBI:18420"/>
    </ligand>
</feature>
<feature type="binding site" evidence="2">
    <location>
        <position position="140"/>
    </location>
    <ligand>
        <name>GTP</name>
        <dbReference type="ChEBI" id="CHEBI:37565"/>
    </ligand>
</feature>
<feature type="binding site" evidence="2">
    <location>
        <position position="144"/>
    </location>
    <ligand>
        <name>GTP</name>
        <dbReference type="ChEBI" id="CHEBI:37565"/>
    </ligand>
</feature>
<feature type="binding site" evidence="2">
    <location>
        <position position="145"/>
    </location>
    <ligand>
        <name>GTP</name>
        <dbReference type="ChEBI" id="CHEBI:37565"/>
    </ligand>
</feature>
<feature type="binding site" evidence="2">
    <location>
        <position position="179"/>
    </location>
    <ligand>
        <name>GTP</name>
        <dbReference type="ChEBI" id="CHEBI:37565"/>
    </ligand>
</feature>
<feature type="binding site" evidence="2">
    <location>
        <position position="206"/>
    </location>
    <ligand>
        <name>GTP</name>
        <dbReference type="ChEBI" id="CHEBI:37565"/>
    </ligand>
</feature>
<feature type="binding site" evidence="2">
    <location>
        <position position="228"/>
    </location>
    <ligand>
        <name>GTP</name>
        <dbReference type="ChEBI" id="CHEBI:37565"/>
    </ligand>
</feature>
<feature type="site" description="Involved in polymerization" evidence="1">
    <location>
        <position position="452"/>
    </location>
</feature>
<feature type="modified residue" description="N6-acetyllysine" evidence="5">
    <location>
        <position position="40"/>
    </location>
</feature>
<feature type="modified residue" description="3'-nitrotyrosine" evidence="4">
    <location>
        <position position="282"/>
    </location>
</feature>
<feature type="modified residue" description="Phosphoserine" evidence="4">
    <location>
        <position position="439"/>
    </location>
</feature>
<feature type="modified residue" description="5-glutamyl polyglutamate" evidence="3">
    <location>
        <position position="446"/>
    </location>
</feature>
<feature type="modified residue" description="3'-nitrotyrosine" evidence="5">
    <location>
        <position position="452"/>
    </location>
</feature>
<feature type="strand" evidence="12">
    <location>
        <begin position="3"/>
        <end position="9"/>
    </location>
</feature>
<feature type="helix" evidence="12">
    <location>
        <begin position="10"/>
        <end position="26"/>
    </location>
</feature>
<feature type="turn" evidence="12">
    <location>
        <begin position="27"/>
        <end position="29"/>
    </location>
</feature>
<feature type="helix" evidence="12">
    <location>
        <begin position="72"/>
        <end position="76"/>
    </location>
</feature>
<feature type="turn" evidence="12">
    <location>
        <begin position="77"/>
        <end position="80"/>
    </location>
</feature>
<feature type="helix" evidence="12">
    <location>
        <begin position="84"/>
        <end position="86"/>
    </location>
</feature>
<feature type="turn" evidence="12">
    <location>
        <begin position="89"/>
        <end position="91"/>
    </location>
</feature>
<feature type="helix" evidence="12">
    <location>
        <begin position="103"/>
        <end position="106"/>
    </location>
</feature>
<feature type="turn" evidence="12">
    <location>
        <begin position="107"/>
        <end position="111"/>
    </location>
</feature>
<feature type="helix" evidence="12">
    <location>
        <begin position="112"/>
        <end position="127"/>
    </location>
</feature>
<feature type="strand" evidence="12">
    <location>
        <begin position="128"/>
        <end position="138"/>
    </location>
</feature>
<feature type="turn" evidence="12">
    <location>
        <begin position="145"/>
        <end position="147"/>
    </location>
</feature>
<feature type="helix" evidence="12">
    <location>
        <begin position="148"/>
        <end position="158"/>
    </location>
</feature>
<feature type="strand" evidence="12">
    <location>
        <begin position="164"/>
        <end position="168"/>
    </location>
</feature>
<feature type="strand" evidence="12">
    <location>
        <begin position="175"/>
        <end position="177"/>
    </location>
</feature>
<feature type="strand" evidence="12">
    <location>
        <begin position="180"/>
        <end position="182"/>
    </location>
</feature>
<feature type="helix" evidence="12">
    <location>
        <begin position="184"/>
        <end position="195"/>
    </location>
</feature>
<feature type="strand" evidence="12">
    <location>
        <begin position="199"/>
        <end position="201"/>
    </location>
</feature>
<feature type="strand" evidence="12">
    <location>
        <begin position="203"/>
        <end position="205"/>
    </location>
</feature>
<feature type="helix" evidence="12">
    <location>
        <begin position="206"/>
        <end position="210"/>
    </location>
</feature>
<feature type="turn" evidence="12">
    <location>
        <begin position="211"/>
        <end position="215"/>
    </location>
</feature>
<feature type="helix" evidence="12">
    <location>
        <begin position="224"/>
        <end position="227"/>
    </location>
</feature>
<feature type="turn" evidence="12">
    <location>
        <begin position="228"/>
        <end position="231"/>
    </location>
</feature>
<feature type="helix" evidence="12">
    <location>
        <begin position="232"/>
        <end position="238"/>
    </location>
</feature>
<feature type="turn" evidence="12">
    <location>
        <begin position="239"/>
        <end position="243"/>
    </location>
</feature>
<feature type="helix" evidence="12">
    <location>
        <begin position="252"/>
        <end position="259"/>
    </location>
</feature>
<feature type="strand" evidence="12">
    <location>
        <begin position="262"/>
        <end position="264"/>
    </location>
</feature>
<feature type="helix" evidence="12">
    <location>
        <begin position="288"/>
        <end position="295"/>
    </location>
</feature>
<feature type="turn" evidence="12">
    <location>
        <begin position="298"/>
        <end position="300"/>
    </location>
</feature>
<feature type="strand" evidence="12">
    <location>
        <begin position="302"/>
        <end position="304"/>
    </location>
</feature>
<feature type="strand" evidence="12">
    <location>
        <begin position="312"/>
        <end position="315"/>
    </location>
</feature>
<feature type="strand" evidence="12">
    <location>
        <begin position="318"/>
        <end position="322"/>
    </location>
</feature>
<feature type="turn" evidence="12">
    <location>
        <begin position="325"/>
        <end position="327"/>
    </location>
</feature>
<feature type="helix" evidence="12">
    <location>
        <begin position="328"/>
        <end position="335"/>
    </location>
</feature>
<feature type="strand" evidence="12">
    <location>
        <begin position="354"/>
        <end position="357"/>
    </location>
</feature>
<feature type="strand" evidence="12">
    <location>
        <begin position="366"/>
        <end position="368"/>
    </location>
</feature>
<feature type="turn" evidence="12">
    <location>
        <begin position="382"/>
        <end position="384"/>
    </location>
</feature>
<feature type="helix" evidence="12">
    <location>
        <begin position="385"/>
        <end position="399"/>
    </location>
</feature>
<feature type="turn" evidence="12">
    <location>
        <begin position="403"/>
        <end position="405"/>
    </location>
</feature>
<feature type="helix" evidence="12">
    <location>
        <begin position="406"/>
        <end position="409"/>
    </location>
</feature>
<feature type="turn" evidence="12">
    <location>
        <begin position="410"/>
        <end position="412"/>
    </location>
</feature>
<feature type="helix" evidence="12">
    <location>
        <begin position="415"/>
        <end position="432"/>
    </location>
</feature>
<feature type="turn" evidence="12">
    <location>
        <begin position="433"/>
        <end position="437"/>
    </location>
</feature>
<evidence type="ECO:0000250" key="1"/>
<evidence type="ECO:0000250" key="2">
    <source>
        <dbReference type="UniProtKB" id="P68363"/>
    </source>
</evidence>
<evidence type="ECO:0000250" key="3">
    <source>
        <dbReference type="UniProtKB" id="P68369"/>
    </source>
</evidence>
<evidence type="ECO:0000250" key="4">
    <source>
        <dbReference type="UniProtKB" id="P68373"/>
    </source>
</evidence>
<evidence type="ECO:0000250" key="5">
    <source>
        <dbReference type="UniProtKB" id="Q71U36"/>
    </source>
</evidence>
<evidence type="ECO:0000250" key="6">
    <source>
        <dbReference type="UniProtKB" id="Q9BQE3"/>
    </source>
</evidence>
<evidence type="ECO:0000256" key="7">
    <source>
        <dbReference type="SAM" id="MobiDB-lite"/>
    </source>
</evidence>
<evidence type="ECO:0000269" key="8">
    <source>
    </source>
</evidence>
<evidence type="ECO:0000269" key="9">
    <source>
    </source>
</evidence>
<evidence type="ECO:0000269" key="10">
    <source>
    </source>
</evidence>
<evidence type="ECO:0000305" key="11"/>
<evidence type="ECO:0007829" key="12">
    <source>
        <dbReference type="PDB" id="1TVK"/>
    </source>
</evidence>
<sequence>MRECISVHVGQAGVQIGNACWELYCLEHGIQPDGQMPSDKTIGGGDDSFNTFFSETGAGKHVPRAVFVDLEPTVIDEVRTGTYRQLFHPEQLITGKEDAANNYARGHYTIGKELIDLVLDRIRKLADQCTGLQGFLIFHSFGGGTGSGFTSLLMERLSVDYGKKSKLEFSIYPAPQVSTAVVEPYNSILTTHTTLEHSDCAFMVDNEAIYDICRRNLDIERPTYTNLNRLIGQIVSSITASLRFDGALNVDLTEFQTNLVPYPRIHFPLATYAPVISAEKAYHEQLSVAEITNACFEPANQMVKCDPRHGKYMACCLLYRGDVVPKDVNAAIATIKTKRTIQFVDWCPTGFKVGINYQPPTVVPGGDLAKVQRAVCMLSNTTAIAEAWARLDHKFDLMYAKRAFVHWYVGEGMEEGEFSEAREDMAALEKDYEEVGMDSVEGEGEEEEGDEY</sequence>
<reference key="1">
    <citation type="submission" date="2006-02" db="EMBL/GenBank/DDBJ databases">
        <authorList>
            <consortium name="NIH - Mammalian Gene Collection (MGC) project"/>
        </authorList>
    </citation>
    <scope>NUCLEOTIDE SEQUENCE [LARGE SCALE MRNA]</scope>
    <source>
        <strain>Hereford</strain>
        <tissue>Uterus</tissue>
    </source>
</reference>
<reference key="2">
    <citation type="journal article" date="1984" name="Nature">
        <title>Dynamic instability of microtubule growth.</title>
        <authorList>
            <person name="Mitchison T."/>
            <person name="Kirschner M."/>
        </authorList>
    </citation>
    <scope>FUNCTION</scope>
    <scope>SUBUNIT</scope>
    <scope>SUBCELLULAR LOCATION</scope>
</reference>
<reference key="3">
    <citation type="journal article" date="1990" name="Biochemistry">
        <title>Role of GTP hydrolysis in microtubule polymerization: evidence for a coupled hydrolysis mechanism.</title>
        <authorList>
            <person name="Stewart R.J."/>
            <person name="Farrell K.W."/>
            <person name="Wilson L."/>
        </authorList>
    </citation>
    <scope>FUNCTION</scope>
    <scope>SUBUNIT</scope>
    <scope>SUBCELLULAR LOCATION</scope>
</reference>
<reference key="4">
    <citation type="journal article" date="1994" name="Curr. Biol.">
        <title>The minimum GTP cap required to stabilize microtubules.</title>
        <authorList>
            <person name="Drechsel D.N."/>
            <person name="Kirschner M.W."/>
        </authorList>
    </citation>
    <scope>FUNCTION</scope>
    <scope>SUBUNIT</scope>
    <scope>SUBCELLULAR LOCATION</scope>
</reference>
<dbReference type="EC" id="3.6.5.-" evidence="2"/>
<dbReference type="EMBL" id="BC113253">
    <property type="protein sequence ID" value="AAI13254.1"/>
    <property type="molecule type" value="mRNA"/>
</dbReference>
<dbReference type="RefSeq" id="NP_001039875.1">
    <property type="nucleotide sequence ID" value="NM_001046410.1"/>
</dbReference>
<dbReference type="PDB" id="1JFF">
    <property type="method" value="EM"/>
    <property type="resolution" value="3.50 A"/>
    <property type="chains" value="A=1-452"/>
</dbReference>
<dbReference type="PDB" id="1SA0">
    <property type="method" value="X-ray"/>
    <property type="resolution" value="3.58 A"/>
    <property type="chains" value="A/C=1-452"/>
</dbReference>
<dbReference type="PDB" id="1SA1">
    <property type="method" value="X-ray"/>
    <property type="resolution" value="4.20 A"/>
    <property type="chains" value="A/C=1-452"/>
</dbReference>
<dbReference type="PDB" id="1TVK">
    <property type="method" value="EM"/>
    <property type="resolution" value="2.89 A"/>
    <property type="chains" value="A=1-440"/>
</dbReference>
<dbReference type="PDB" id="1Z2B">
    <property type="method" value="X-ray"/>
    <property type="resolution" value="4.10 A"/>
    <property type="chains" value="A/C=1-451"/>
</dbReference>
<dbReference type="PDB" id="2WBE">
    <property type="method" value="EM"/>
    <property type="resolution" value="9.40 A"/>
    <property type="chains" value="A=1-452"/>
</dbReference>
<dbReference type="PDB" id="2XRP">
    <property type="method" value="EM"/>
    <property type="resolution" value="8.20 A"/>
    <property type="chains" value="B/D/F/H=1-449"/>
</dbReference>
<dbReference type="PDB" id="3EDL">
    <property type="method" value="EM"/>
    <property type="resolution" value="28.00 A"/>
    <property type="chains" value="F=1-452"/>
</dbReference>
<dbReference type="PDB" id="3IZ0">
    <property type="method" value="EM"/>
    <property type="resolution" value="8.60 A"/>
    <property type="chains" value="A=1-452"/>
</dbReference>
<dbReference type="PDB" id="4AQV">
    <property type="method" value="EM"/>
    <property type="resolution" value="9.70 A"/>
    <property type="chains" value="A=1-452"/>
</dbReference>
<dbReference type="PDB" id="4AQW">
    <property type="method" value="EM"/>
    <property type="resolution" value="9.50 A"/>
    <property type="chains" value="A=1-452"/>
</dbReference>
<dbReference type="PDB" id="4ATU">
    <property type="method" value="EM"/>
    <property type="resolution" value="8.30 A"/>
    <property type="chains" value="B/D/F/H=1-452"/>
</dbReference>
<dbReference type="PDB" id="4ATX">
    <property type="method" value="EM"/>
    <property type="resolution" value="8.20 A"/>
    <property type="chains" value="B=1-452"/>
</dbReference>
<dbReference type="PDB" id="4CK5">
    <property type="method" value="EM"/>
    <property type="resolution" value="10.00 A"/>
    <property type="chains" value="A=1-452"/>
</dbReference>
<dbReference type="PDB" id="4CK6">
    <property type="method" value="EM"/>
    <property type="resolution" value="9.20 A"/>
    <property type="chains" value="A=1-452"/>
</dbReference>
<dbReference type="PDB" id="4CK7">
    <property type="method" value="EM"/>
    <property type="resolution" value="9.20 A"/>
    <property type="chains" value="A=1-452"/>
</dbReference>
<dbReference type="PDB" id="5M5I">
    <property type="method" value="EM"/>
    <property type="resolution" value="9.30 A"/>
    <property type="chains" value="A=1-447"/>
</dbReference>
<dbReference type="PDB" id="5M5L">
    <property type="method" value="EM"/>
    <property type="resolution" value="9.30 A"/>
    <property type="chains" value="A=1-452"/>
</dbReference>
<dbReference type="PDB" id="5M5M">
    <property type="method" value="EM"/>
    <property type="resolution" value="9.30 A"/>
    <property type="chains" value="A=1-452"/>
</dbReference>
<dbReference type="PDB" id="5M5N">
    <property type="method" value="EM"/>
    <property type="resolution" value="9.30 A"/>
    <property type="chains" value="A=1-452"/>
</dbReference>
<dbReference type="PDB" id="5M5O">
    <property type="method" value="EM"/>
    <property type="resolution" value="9.30 A"/>
    <property type="chains" value="A=1-452"/>
</dbReference>
<dbReference type="PDB" id="7RRO">
    <property type="method" value="EM"/>
    <property type="resolution" value="3.40 A"/>
    <property type="chains" value="AA/AC/AE/AG/AI/AK/AM/BA/BC/BE/BG/BI/BK/BM/CA/CC/CE/CG/CI/CK/CM/DA/DC/DE/DG/DI/DK/DM/EC/EE=1-452"/>
</dbReference>
<dbReference type="PDB" id="9CPB">
    <property type="method" value="EM"/>
    <property type="resolution" value="3.52 A"/>
    <property type="chains" value="AC/AE/AG/AI/AK/BC/BE/BG/BI/BK/CC/CE/CG/CI/CK/CM/DC/DE/DG/DI/DK/DM/EC/EE/EG/EI/EK/EM/FC/FE=1-452"/>
</dbReference>
<dbReference type="PDBsum" id="1JFF"/>
<dbReference type="PDBsum" id="1SA0"/>
<dbReference type="PDBsum" id="1SA1"/>
<dbReference type="PDBsum" id="1TVK"/>
<dbReference type="PDBsum" id="1Z2B"/>
<dbReference type="PDBsum" id="2WBE"/>
<dbReference type="PDBsum" id="2XRP"/>
<dbReference type="PDBsum" id="3EDL"/>
<dbReference type="PDBsum" id="3IZ0"/>
<dbReference type="PDBsum" id="4AQV"/>
<dbReference type="PDBsum" id="4AQW"/>
<dbReference type="PDBsum" id="4ATU"/>
<dbReference type="PDBsum" id="4ATX"/>
<dbReference type="PDBsum" id="4CK5"/>
<dbReference type="PDBsum" id="4CK6"/>
<dbReference type="PDBsum" id="4CK7"/>
<dbReference type="PDBsum" id="5M5I"/>
<dbReference type="PDBsum" id="5M5L"/>
<dbReference type="PDBsum" id="5M5M"/>
<dbReference type="PDBsum" id="5M5N"/>
<dbReference type="PDBsum" id="5M5O"/>
<dbReference type="PDBsum" id="7RRO"/>
<dbReference type="PDBsum" id="9CPB"/>
<dbReference type="EMDB" id="EMD-16436"/>
<dbReference type="EMDB" id="EMD-1788"/>
<dbReference type="EMDB" id="EMD-2078"/>
<dbReference type="EMDB" id="EMD-2095"/>
<dbReference type="EMDB" id="EMD-2098"/>
<dbReference type="EMDB" id="EMD-21919"/>
<dbReference type="EMDB" id="EMD-24664"/>
<dbReference type="EMDB" id="EMD-2533"/>
<dbReference type="EMDB" id="EMD-2534"/>
<dbReference type="EMDB" id="EMD-2535"/>
<dbReference type="EMDB" id="EMD-2536"/>
<dbReference type="EMDB" id="EMD-2537"/>
<dbReference type="EMDB" id="EMD-2538"/>
<dbReference type="EMDB" id="EMD-2539"/>
<dbReference type="EMDB" id="EMD-2540"/>
<dbReference type="EMDB" id="EMD-2541"/>
<dbReference type="EMDB" id="EMD-2542"/>
<dbReference type="EMDB" id="EMD-25649"/>
<dbReference type="EMDB" id="EMD-25658"/>
<dbReference type="EMDB" id="EMD-25664"/>
<dbReference type="EMDB" id="EMD-25674"/>
<dbReference type="EMDB" id="EMD-25897"/>
<dbReference type="EMDB" id="EMD-25908"/>
<dbReference type="EMDB" id="EMD-3445"/>
<dbReference type="EMDB" id="EMD-45801"/>
<dbReference type="EMDB" id="EMD-8546"/>
<dbReference type="EMDB" id="EMD-8547"/>
<dbReference type="SMR" id="Q2HJ86"/>
<dbReference type="FunCoup" id="Q2HJ86">
    <property type="interactions" value="622"/>
</dbReference>
<dbReference type="STRING" id="9913.ENSBTAP00000057311"/>
<dbReference type="PaxDb" id="9913-ENSBTAP00000038183"/>
<dbReference type="PeptideAtlas" id="Q2HJ86"/>
<dbReference type="Ensembl" id="ENSBTAT00000076713.2">
    <property type="protein sequence ID" value="ENSBTAP00000057311.1"/>
    <property type="gene ID" value="ENSBTAG00000030973.3"/>
</dbReference>
<dbReference type="GeneID" id="535605"/>
<dbReference type="KEGG" id="bta:535605"/>
<dbReference type="CTD" id="535605"/>
<dbReference type="VEuPathDB" id="HostDB:ENSBTAG00000030973"/>
<dbReference type="eggNOG" id="KOG1376">
    <property type="taxonomic scope" value="Eukaryota"/>
</dbReference>
<dbReference type="GeneTree" id="ENSGT00950000182825"/>
<dbReference type="HOGENOM" id="CLU_015718_0_0_1"/>
<dbReference type="InParanoid" id="Q2HJ86"/>
<dbReference type="OMA" id="LEADQCK"/>
<dbReference type="OrthoDB" id="1844at2759"/>
<dbReference type="TreeFam" id="TF300314"/>
<dbReference type="EvolutionaryTrace" id="Q2HJ86"/>
<dbReference type="Proteomes" id="UP000009136">
    <property type="component" value="Chromosome 2"/>
</dbReference>
<dbReference type="Bgee" id="ENSBTAG00000030973">
    <property type="expression patterns" value="Expressed in oviduct epithelium and 89 other cell types or tissues"/>
</dbReference>
<dbReference type="GO" id="GO:0005737">
    <property type="term" value="C:cytoplasm"/>
    <property type="evidence" value="ECO:0000318"/>
    <property type="project" value="GO_Central"/>
</dbReference>
<dbReference type="GO" id="GO:0005874">
    <property type="term" value="C:microtubule"/>
    <property type="evidence" value="ECO:0000318"/>
    <property type="project" value="GO_Central"/>
</dbReference>
<dbReference type="GO" id="GO:0005525">
    <property type="term" value="F:GTP binding"/>
    <property type="evidence" value="ECO:0000318"/>
    <property type="project" value="GO_Central"/>
</dbReference>
<dbReference type="GO" id="GO:0016787">
    <property type="term" value="F:hydrolase activity"/>
    <property type="evidence" value="ECO:0007669"/>
    <property type="project" value="UniProtKB-KW"/>
</dbReference>
<dbReference type="GO" id="GO:0046872">
    <property type="term" value="F:metal ion binding"/>
    <property type="evidence" value="ECO:0007669"/>
    <property type="project" value="UniProtKB-KW"/>
</dbReference>
<dbReference type="GO" id="GO:0005200">
    <property type="term" value="F:structural constituent of cytoskeleton"/>
    <property type="evidence" value="ECO:0000318"/>
    <property type="project" value="GO_Central"/>
</dbReference>
<dbReference type="GO" id="GO:0000226">
    <property type="term" value="P:microtubule cytoskeleton organization"/>
    <property type="evidence" value="ECO:0000318"/>
    <property type="project" value="GO_Central"/>
</dbReference>
<dbReference type="GO" id="GO:0000278">
    <property type="term" value="P:mitotic cell cycle"/>
    <property type="evidence" value="ECO:0000318"/>
    <property type="project" value="GO_Central"/>
</dbReference>
<dbReference type="CDD" id="cd02186">
    <property type="entry name" value="alpha_tubulin"/>
    <property type="match status" value="1"/>
</dbReference>
<dbReference type="FunFam" id="1.10.287.600:FF:000005">
    <property type="entry name" value="Tubulin alpha chain"/>
    <property type="match status" value="1"/>
</dbReference>
<dbReference type="FunFam" id="3.30.1330.20:FF:000001">
    <property type="entry name" value="Tubulin alpha chain"/>
    <property type="match status" value="1"/>
</dbReference>
<dbReference type="FunFam" id="3.40.50.1440:FF:000002">
    <property type="entry name" value="Tubulin alpha chain"/>
    <property type="match status" value="1"/>
</dbReference>
<dbReference type="Gene3D" id="1.10.287.600">
    <property type="entry name" value="Helix hairpin bin"/>
    <property type="match status" value="1"/>
</dbReference>
<dbReference type="Gene3D" id="3.30.1330.20">
    <property type="entry name" value="Tubulin/FtsZ, C-terminal domain"/>
    <property type="match status" value="1"/>
</dbReference>
<dbReference type="Gene3D" id="3.40.50.1440">
    <property type="entry name" value="Tubulin/FtsZ, GTPase domain"/>
    <property type="match status" value="1"/>
</dbReference>
<dbReference type="InterPro" id="IPR002452">
    <property type="entry name" value="Alpha_tubulin"/>
</dbReference>
<dbReference type="InterPro" id="IPR008280">
    <property type="entry name" value="Tub_FtsZ_C"/>
</dbReference>
<dbReference type="InterPro" id="IPR000217">
    <property type="entry name" value="Tubulin"/>
</dbReference>
<dbReference type="InterPro" id="IPR037103">
    <property type="entry name" value="Tubulin/FtsZ-like_C"/>
</dbReference>
<dbReference type="InterPro" id="IPR018316">
    <property type="entry name" value="Tubulin/FtsZ_2-layer-sand-dom"/>
</dbReference>
<dbReference type="InterPro" id="IPR036525">
    <property type="entry name" value="Tubulin/FtsZ_GTPase_sf"/>
</dbReference>
<dbReference type="InterPro" id="IPR023123">
    <property type="entry name" value="Tubulin_C"/>
</dbReference>
<dbReference type="InterPro" id="IPR017975">
    <property type="entry name" value="Tubulin_CS"/>
</dbReference>
<dbReference type="InterPro" id="IPR003008">
    <property type="entry name" value="Tubulin_FtsZ_GTPase"/>
</dbReference>
<dbReference type="PANTHER" id="PTHR11588">
    <property type="entry name" value="TUBULIN"/>
    <property type="match status" value="1"/>
</dbReference>
<dbReference type="Pfam" id="PF00091">
    <property type="entry name" value="Tubulin"/>
    <property type="match status" value="1"/>
</dbReference>
<dbReference type="Pfam" id="PF03953">
    <property type="entry name" value="Tubulin_C"/>
    <property type="match status" value="1"/>
</dbReference>
<dbReference type="PRINTS" id="PR01162">
    <property type="entry name" value="ALPHATUBULIN"/>
</dbReference>
<dbReference type="PRINTS" id="PR01161">
    <property type="entry name" value="TUBULIN"/>
</dbReference>
<dbReference type="SMART" id="SM00864">
    <property type="entry name" value="Tubulin"/>
    <property type="match status" value="1"/>
</dbReference>
<dbReference type="SMART" id="SM00865">
    <property type="entry name" value="Tubulin_C"/>
    <property type="match status" value="1"/>
</dbReference>
<dbReference type="SUPFAM" id="SSF55307">
    <property type="entry name" value="Tubulin C-terminal domain-like"/>
    <property type="match status" value="1"/>
</dbReference>
<dbReference type="SUPFAM" id="SSF52490">
    <property type="entry name" value="Tubulin nucleotide-binding domain-like"/>
    <property type="match status" value="1"/>
</dbReference>
<dbReference type="PROSITE" id="PS00227">
    <property type="entry name" value="TUBULIN"/>
    <property type="match status" value="1"/>
</dbReference>
<organism>
    <name type="scientific">Bos taurus</name>
    <name type="common">Bovine</name>
    <dbReference type="NCBI Taxonomy" id="9913"/>
    <lineage>
        <taxon>Eukaryota</taxon>
        <taxon>Metazoa</taxon>
        <taxon>Chordata</taxon>
        <taxon>Craniata</taxon>
        <taxon>Vertebrata</taxon>
        <taxon>Euteleostomi</taxon>
        <taxon>Mammalia</taxon>
        <taxon>Eutheria</taxon>
        <taxon>Laurasiatheria</taxon>
        <taxon>Artiodactyla</taxon>
        <taxon>Ruminantia</taxon>
        <taxon>Pecora</taxon>
        <taxon>Bovidae</taxon>
        <taxon>Bovinae</taxon>
        <taxon>Bos</taxon>
    </lineage>
</organism>
<proteinExistence type="evidence at protein level"/>
<name>TBA1D_BOVIN</name>